<protein>
    <recommendedName>
        <fullName>Tumor necrosis factor receptor superfamily member 13B</fullName>
    </recommendedName>
    <alternativeName>
        <fullName>Transmembrane activator and CAML interactor</fullName>
    </alternativeName>
    <cdAntigenName>CD267</cdAntigenName>
</protein>
<keyword id="KW-1064">Adaptive immunity</keyword>
<keyword id="KW-1015">Disulfide bond</keyword>
<keyword id="KW-0391">Immunity</keyword>
<keyword id="KW-0472">Membrane</keyword>
<keyword id="KW-0675">Receptor</keyword>
<keyword id="KW-1185">Reference proteome</keyword>
<keyword id="KW-0677">Repeat</keyword>
<keyword id="KW-0735">Signal-anchor</keyword>
<keyword id="KW-0812">Transmembrane</keyword>
<keyword id="KW-1133">Transmembrane helix</keyword>
<sequence>MAMAFCPKDQYWDSSRKSCVSCALTCSQRSQRTCTDFCKFINCRKEQGRYYDHLLGACVSCDSTCTQHPQQCAHFCEKRPRSQANLQPELGRPQAGEVEVRSDNSGRHQGSEHGPGLRLSSDQLTLYCTLGVCLCAIFCCFLVALASFLRRRGEPLPSQPAGPRGSQANSPHAHRPVTEACDEVTASPQPVETCSFCFPERSSPTQESAPRSLGIHGFAGTAAPQPCMRATVGGLGVLRASTGDARPAT</sequence>
<accession>Q9ET35</accession>
<accession>Q9DBZ3</accession>
<gene>
    <name type="primary">Tnfrsf13b</name>
    <name type="synonym">Taci</name>
</gene>
<name>TR13B_MOUSE</name>
<feature type="chain" id="PRO_0000058932" description="Tumor necrosis factor receptor superfamily member 13B">
    <location>
        <begin position="1"/>
        <end position="249"/>
    </location>
</feature>
<feature type="topological domain" description="Extracellular" evidence="2">
    <location>
        <begin position="1"/>
        <end position="128"/>
    </location>
</feature>
<feature type="transmembrane region" description="Helical; Signal-anchor for type III membrane protein" evidence="2">
    <location>
        <begin position="129"/>
        <end position="149"/>
    </location>
</feature>
<feature type="topological domain" description="Cytoplasmic" evidence="2">
    <location>
        <begin position="150"/>
        <end position="249"/>
    </location>
</feature>
<feature type="repeat" description="TNFR-Cys 1">
    <location>
        <begin position="5"/>
        <end position="38"/>
    </location>
</feature>
<feature type="repeat" description="TNFR-Cys 2">
    <location>
        <begin position="42"/>
        <end position="76"/>
    </location>
</feature>
<feature type="region of interest" description="Disordered" evidence="3">
    <location>
        <begin position="86"/>
        <end position="116"/>
    </location>
</feature>
<feature type="region of interest" description="Disordered" evidence="3">
    <location>
        <begin position="156"/>
        <end position="176"/>
    </location>
</feature>
<feature type="compositionally biased region" description="Basic and acidic residues" evidence="3">
    <location>
        <begin position="98"/>
        <end position="111"/>
    </location>
</feature>
<feature type="disulfide bond" evidence="1">
    <location>
        <begin position="6"/>
        <end position="19"/>
    </location>
</feature>
<feature type="disulfide bond" evidence="1">
    <location>
        <begin position="22"/>
        <end position="34"/>
    </location>
</feature>
<feature type="disulfide bond" evidence="1">
    <location>
        <begin position="26"/>
        <end position="38"/>
    </location>
</feature>
<feature type="disulfide bond" evidence="1">
    <location>
        <begin position="43"/>
        <end position="58"/>
    </location>
</feature>
<feature type="disulfide bond" evidence="1">
    <location>
        <begin position="61"/>
        <end position="72"/>
    </location>
</feature>
<feature type="disulfide bond" evidence="1">
    <location>
        <begin position="65"/>
        <end position="76"/>
    </location>
</feature>
<feature type="sequence conflict" description="In Ref. 2; BAB23457." evidence="6" ref="2">
    <original>I</original>
    <variation>F</variation>
    <location>
        <position position="137"/>
    </location>
</feature>
<reference key="1">
    <citation type="journal article" date="2000" name="Nat. Immunol.">
        <title>Identification of a receptor for BLyS demonstrates a crucial role in humoral immunity.</title>
        <authorList>
            <person name="Yan M."/>
            <person name="Marsters S.A."/>
            <person name="Grewal I.S."/>
            <person name="Wang H."/>
            <person name="Ashkenazi A."/>
            <person name="Dixit V.M."/>
        </authorList>
    </citation>
    <scope>NUCLEOTIDE SEQUENCE [MRNA]</scope>
    <source>
        <tissue>Spleen</tissue>
    </source>
</reference>
<reference key="2">
    <citation type="journal article" date="2005" name="Science">
        <title>The transcriptional landscape of the mammalian genome.</title>
        <authorList>
            <person name="Carninci P."/>
            <person name="Kasukawa T."/>
            <person name="Katayama S."/>
            <person name="Gough J."/>
            <person name="Frith M.C."/>
            <person name="Maeda N."/>
            <person name="Oyama R."/>
            <person name="Ravasi T."/>
            <person name="Lenhard B."/>
            <person name="Wells C."/>
            <person name="Kodzius R."/>
            <person name="Shimokawa K."/>
            <person name="Bajic V.B."/>
            <person name="Brenner S.E."/>
            <person name="Batalov S."/>
            <person name="Forrest A.R."/>
            <person name="Zavolan M."/>
            <person name="Davis M.J."/>
            <person name="Wilming L.G."/>
            <person name="Aidinis V."/>
            <person name="Allen J.E."/>
            <person name="Ambesi-Impiombato A."/>
            <person name="Apweiler R."/>
            <person name="Aturaliya R.N."/>
            <person name="Bailey T.L."/>
            <person name="Bansal M."/>
            <person name="Baxter L."/>
            <person name="Beisel K.W."/>
            <person name="Bersano T."/>
            <person name="Bono H."/>
            <person name="Chalk A.M."/>
            <person name="Chiu K.P."/>
            <person name="Choudhary V."/>
            <person name="Christoffels A."/>
            <person name="Clutterbuck D.R."/>
            <person name="Crowe M.L."/>
            <person name="Dalla E."/>
            <person name="Dalrymple B.P."/>
            <person name="de Bono B."/>
            <person name="Della Gatta G."/>
            <person name="di Bernardo D."/>
            <person name="Down T."/>
            <person name="Engstrom P."/>
            <person name="Fagiolini M."/>
            <person name="Faulkner G."/>
            <person name="Fletcher C.F."/>
            <person name="Fukushima T."/>
            <person name="Furuno M."/>
            <person name="Futaki S."/>
            <person name="Gariboldi M."/>
            <person name="Georgii-Hemming P."/>
            <person name="Gingeras T.R."/>
            <person name="Gojobori T."/>
            <person name="Green R.E."/>
            <person name="Gustincich S."/>
            <person name="Harbers M."/>
            <person name="Hayashi Y."/>
            <person name="Hensch T.K."/>
            <person name="Hirokawa N."/>
            <person name="Hill D."/>
            <person name="Huminiecki L."/>
            <person name="Iacono M."/>
            <person name="Ikeo K."/>
            <person name="Iwama A."/>
            <person name="Ishikawa T."/>
            <person name="Jakt M."/>
            <person name="Kanapin A."/>
            <person name="Katoh M."/>
            <person name="Kawasawa Y."/>
            <person name="Kelso J."/>
            <person name="Kitamura H."/>
            <person name="Kitano H."/>
            <person name="Kollias G."/>
            <person name="Krishnan S.P."/>
            <person name="Kruger A."/>
            <person name="Kummerfeld S.K."/>
            <person name="Kurochkin I.V."/>
            <person name="Lareau L.F."/>
            <person name="Lazarevic D."/>
            <person name="Lipovich L."/>
            <person name="Liu J."/>
            <person name="Liuni S."/>
            <person name="McWilliam S."/>
            <person name="Madan Babu M."/>
            <person name="Madera M."/>
            <person name="Marchionni L."/>
            <person name="Matsuda H."/>
            <person name="Matsuzawa S."/>
            <person name="Miki H."/>
            <person name="Mignone F."/>
            <person name="Miyake S."/>
            <person name="Morris K."/>
            <person name="Mottagui-Tabar S."/>
            <person name="Mulder N."/>
            <person name="Nakano N."/>
            <person name="Nakauchi H."/>
            <person name="Ng P."/>
            <person name="Nilsson R."/>
            <person name="Nishiguchi S."/>
            <person name="Nishikawa S."/>
            <person name="Nori F."/>
            <person name="Ohara O."/>
            <person name="Okazaki Y."/>
            <person name="Orlando V."/>
            <person name="Pang K.C."/>
            <person name="Pavan W.J."/>
            <person name="Pavesi G."/>
            <person name="Pesole G."/>
            <person name="Petrovsky N."/>
            <person name="Piazza S."/>
            <person name="Reed J."/>
            <person name="Reid J.F."/>
            <person name="Ring B.Z."/>
            <person name="Ringwald M."/>
            <person name="Rost B."/>
            <person name="Ruan Y."/>
            <person name="Salzberg S.L."/>
            <person name="Sandelin A."/>
            <person name="Schneider C."/>
            <person name="Schoenbach C."/>
            <person name="Sekiguchi K."/>
            <person name="Semple C.A."/>
            <person name="Seno S."/>
            <person name="Sessa L."/>
            <person name="Sheng Y."/>
            <person name="Shibata Y."/>
            <person name="Shimada H."/>
            <person name="Shimada K."/>
            <person name="Silva D."/>
            <person name="Sinclair B."/>
            <person name="Sperling S."/>
            <person name="Stupka E."/>
            <person name="Sugiura K."/>
            <person name="Sultana R."/>
            <person name="Takenaka Y."/>
            <person name="Taki K."/>
            <person name="Tammoja K."/>
            <person name="Tan S.L."/>
            <person name="Tang S."/>
            <person name="Taylor M.S."/>
            <person name="Tegner J."/>
            <person name="Teichmann S.A."/>
            <person name="Ueda H.R."/>
            <person name="van Nimwegen E."/>
            <person name="Verardo R."/>
            <person name="Wei C.L."/>
            <person name="Yagi K."/>
            <person name="Yamanishi H."/>
            <person name="Zabarovsky E."/>
            <person name="Zhu S."/>
            <person name="Zimmer A."/>
            <person name="Hide W."/>
            <person name="Bult C."/>
            <person name="Grimmond S.M."/>
            <person name="Teasdale R.D."/>
            <person name="Liu E.T."/>
            <person name="Brusic V."/>
            <person name="Quackenbush J."/>
            <person name="Wahlestedt C."/>
            <person name="Mattick J.S."/>
            <person name="Hume D.A."/>
            <person name="Kai C."/>
            <person name="Sasaki D."/>
            <person name="Tomaru Y."/>
            <person name="Fukuda S."/>
            <person name="Kanamori-Katayama M."/>
            <person name="Suzuki M."/>
            <person name="Aoki J."/>
            <person name="Arakawa T."/>
            <person name="Iida J."/>
            <person name="Imamura K."/>
            <person name="Itoh M."/>
            <person name="Kato T."/>
            <person name="Kawaji H."/>
            <person name="Kawagashira N."/>
            <person name="Kawashima T."/>
            <person name="Kojima M."/>
            <person name="Kondo S."/>
            <person name="Konno H."/>
            <person name="Nakano K."/>
            <person name="Ninomiya N."/>
            <person name="Nishio T."/>
            <person name="Okada M."/>
            <person name="Plessy C."/>
            <person name="Shibata K."/>
            <person name="Shiraki T."/>
            <person name="Suzuki S."/>
            <person name="Tagami M."/>
            <person name="Waki K."/>
            <person name="Watahiki A."/>
            <person name="Okamura-Oho Y."/>
            <person name="Suzuki H."/>
            <person name="Kawai J."/>
            <person name="Hayashizaki Y."/>
        </authorList>
    </citation>
    <scope>NUCLEOTIDE SEQUENCE [LARGE SCALE MRNA]</scope>
    <source>
        <strain>C57BL/6J</strain>
        <tissue>Lung</tissue>
    </source>
</reference>
<reference key="3">
    <citation type="journal article" date="2000" name="J. Exp. Med.">
        <title>TACI is a TRAF-interacting receptor for TALL-1, a tumor necrosis factor family member involved in B cell regulation.</title>
        <authorList>
            <person name="Xia X.-Z."/>
            <person name="Treanor J."/>
            <person name="Senaldi G."/>
            <person name="Khare S.D."/>
            <person name="Boone T."/>
            <person name="Kelley M."/>
            <person name="Theill L.E."/>
            <person name="Colombero A."/>
            <person name="Solovyev I."/>
            <person name="Lee F."/>
            <person name="McCabe S."/>
            <person name="Elliott R."/>
            <person name="Miner K."/>
            <person name="Hawkins N."/>
            <person name="Guo J."/>
            <person name="Stolina M."/>
            <person name="Yu G."/>
            <person name="Wang J."/>
            <person name="Delaney J."/>
            <person name="Meng S.-Y."/>
            <person name="Boyle W.J."/>
            <person name="Hsu H."/>
        </authorList>
    </citation>
    <scope>FUNCTION</scope>
</reference>
<reference key="4">
    <citation type="journal article" date="2001" name="Nat. Immunol.">
        <title>TACI-ligand interactions are required for T cell activation and collagen-induced arthritis in mice.</title>
        <authorList>
            <person name="Wang H."/>
            <person name="Marsters S.A."/>
            <person name="Baker T."/>
            <person name="Chan B."/>
            <person name="Lee W.P."/>
            <person name="Fu L."/>
            <person name="Tumas D."/>
            <person name="Yan M."/>
            <person name="Dixit V.M."/>
            <person name="Ashkenazi A."/>
            <person name="Grewal I.S."/>
        </authorList>
    </citation>
    <scope>FUNCTION</scope>
</reference>
<comment type="function">
    <text evidence="1 4 5">Receptor for TNFSF13/APRIL and TNFSF13B/TALL1/BAFF/BLYS that binds both ligands with similar high affinity. Mediates calcineurin-dependent activation of NF-AT, as well as activation of NF-kappa-B and AP-1. Involved in the stimulation of B- and T-cell function and the regulation of humoral immunity (By similarity).</text>
</comment>
<comment type="subunit">
    <text evidence="1">Binds TRAF2, TRAF5 and TRAF6. Binds the NH2-terminal domain of CAMLG with its C-terminus (By similarity).</text>
</comment>
<comment type="subcellular location">
    <subcellularLocation>
        <location evidence="6">Membrane</location>
        <topology evidence="6">Single-pass type III membrane protein</topology>
    </subcellularLocation>
</comment>
<proteinExistence type="evidence at transcript level"/>
<organism>
    <name type="scientific">Mus musculus</name>
    <name type="common">Mouse</name>
    <dbReference type="NCBI Taxonomy" id="10090"/>
    <lineage>
        <taxon>Eukaryota</taxon>
        <taxon>Metazoa</taxon>
        <taxon>Chordata</taxon>
        <taxon>Craniata</taxon>
        <taxon>Vertebrata</taxon>
        <taxon>Euteleostomi</taxon>
        <taxon>Mammalia</taxon>
        <taxon>Eutheria</taxon>
        <taxon>Euarchontoglires</taxon>
        <taxon>Glires</taxon>
        <taxon>Rodentia</taxon>
        <taxon>Myomorpha</taxon>
        <taxon>Muroidea</taxon>
        <taxon>Muridae</taxon>
        <taxon>Murinae</taxon>
        <taxon>Mus</taxon>
        <taxon>Mus</taxon>
    </lineage>
</organism>
<evidence type="ECO:0000250" key="1"/>
<evidence type="ECO:0000255" key="2"/>
<evidence type="ECO:0000256" key="3">
    <source>
        <dbReference type="SAM" id="MobiDB-lite"/>
    </source>
</evidence>
<evidence type="ECO:0000269" key="4">
    <source>
    </source>
</evidence>
<evidence type="ECO:0000269" key="5">
    <source>
    </source>
</evidence>
<evidence type="ECO:0000305" key="6"/>
<dbReference type="EMBL" id="AF257673">
    <property type="protein sequence ID" value="AAG00081.1"/>
    <property type="molecule type" value="mRNA"/>
</dbReference>
<dbReference type="EMBL" id="AK004668">
    <property type="protein sequence ID" value="BAB23457.1"/>
    <property type="molecule type" value="mRNA"/>
</dbReference>
<dbReference type="CCDS" id="CCDS24806.1"/>
<dbReference type="RefSeq" id="NP_067324.1">
    <property type="nucleotide sequence ID" value="NM_021349.3"/>
</dbReference>
<dbReference type="RefSeq" id="XP_006533914.1">
    <property type="nucleotide sequence ID" value="XM_006533851.5"/>
</dbReference>
<dbReference type="RefSeq" id="XP_006533915.1">
    <property type="nucleotide sequence ID" value="XM_006533852.3"/>
</dbReference>
<dbReference type="SMR" id="Q9ET35"/>
<dbReference type="FunCoup" id="Q9ET35">
    <property type="interactions" value="824"/>
</dbReference>
<dbReference type="IntAct" id="Q9ET35">
    <property type="interactions" value="6"/>
</dbReference>
<dbReference type="STRING" id="10090.ENSMUSP00000010286"/>
<dbReference type="iPTMnet" id="Q9ET35"/>
<dbReference type="PhosphoSitePlus" id="Q9ET35"/>
<dbReference type="PaxDb" id="10090-ENSMUSP00000010286"/>
<dbReference type="ProteomicsDB" id="259178"/>
<dbReference type="Antibodypedia" id="35076">
    <property type="antibodies" value="660 antibodies from 44 providers"/>
</dbReference>
<dbReference type="DNASU" id="57916"/>
<dbReference type="Ensembl" id="ENSMUST00000010286.8">
    <property type="protein sequence ID" value="ENSMUSP00000010286.2"/>
    <property type="gene ID" value="ENSMUSG00000010142.13"/>
</dbReference>
<dbReference type="Ensembl" id="ENSMUST00000101103.4">
    <property type="protein sequence ID" value="ENSMUSP00000098662.4"/>
    <property type="gene ID" value="ENSMUSG00000010142.13"/>
</dbReference>
<dbReference type="GeneID" id="57916"/>
<dbReference type="KEGG" id="mmu:57916"/>
<dbReference type="UCSC" id="uc007jha.1">
    <property type="organism name" value="mouse"/>
</dbReference>
<dbReference type="AGR" id="MGI:1889411"/>
<dbReference type="CTD" id="23495"/>
<dbReference type="MGI" id="MGI:1889411">
    <property type="gene designation" value="Tnfrsf13b"/>
</dbReference>
<dbReference type="VEuPathDB" id="HostDB:ENSMUSG00000010142"/>
<dbReference type="eggNOG" id="ENOG502SANG">
    <property type="taxonomic scope" value="Eukaryota"/>
</dbReference>
<dbReference type="GeneTree" id="ENSGT00390000013910"/>
<dbReference type="HOGENOM" id="CLU_086237_0_0_1"/>
<dbReference type="InParanoid" id="Q9ET35"/>
<dbReference type="OMA" id="CESMDCN"/>
<dbReference type="OrthoDB" id="9934669at2759"/>
<dbReference type="PhylomeDB" id="Q9ET35"/>
<dbReference type="TreeFam" id="TF337993"/>
<dbReference type="Reactome" id="R-MMU-5669034">
    <property type="pathway name" value="TNFs bind their physiological receptors"/>
</dbReference>
<dbReference type="BioGRID-ORCS" id="57916">
    <property type="hits" value="1 hit in 76 CRISPR screens"/>
</dbReference>
<dbReference type="PRO" id="PR:Q9ET35"/>
<dbReference type="Proteomes" id="UP000000589">
    <property type="component" value="Chromosome 11"/>
</dbReference>
<dbReference type="RNAct" id="Q9ET35">
    <property type="molecule type" value="protein"/>
</dbReference>
<dbReference type="Bgee" id="ENSMUSG00000010142">
    <property type="expression patterns" value="Expressed in spleen and 75 other cell types or tissues"/>
</dbReference>
<dbReference type="ExpressionAtlas" id="Q9ET35">
    <property type="expression patterns" value="baseline and differential"/>
</dbReference>
<dbReference type="GO" id="GO:0009897">
    <property type="term" value="C:external side of plasma membrane"/>
    <property type="evidence" value="ECO:0000314"/>
    <property type="project" value="MGI"/>
</dbReference>
<dbReference type="GO" id="GO:0005886">
    <property type="term" value="C:plasma membrane"/>
    <property type="evidence" value="ECO:0000314"/>
    <property type="project" value="MGI"/>
</dbReference>
<dbReference type="GO" id="GO:0002250">
    <property type="term" value="P:adaptive immune response"/>
    <property type="evidence" value="ECO:0007669"/>
    <property type="project" value="UniProtKB-KW"/>
</dbReference>
<dbReference type="GO" id="GO:0001782">
    <property type="term" value="P:B cell homeostasis"/>
    <property type="evidence" value="ECO:0000314"/>
    <property type="project" value="MGI"/>
</dbReference>
<dbReference type="GO" id="GO:0002244">
    <property type="term" value="P:hematopoietic progenitor cell differentiation"/>
    <property type="evidence" value="ECO:0000315"/>
    <property type="project" value="MGI"/>
</dbReference>
<dbReference type="GO" id="GO:0030889">
    <property type="term" value="P:negative regulation of B cell proliferation"/>
    <property type="evidence" value="ECO:0000315"/>
    <property type="project" value="MGI"/>
</dbReference>
<dbReference type="CDD" id="cd13415">
    <property type="entry name" value="TNFRSF13B"/>
    <property type="match status" value="1"/>
</dbReference>
<dbReference type="FunFam" id="4.10.1290.10:FF:000001">
    <property type="entry name" value="Tumor necrosis factor receptor superfamily member 13B"/>
    <property type="match status" value="1"/>
</dbReference>
<dbReference type="FunFam" id="4.10.1290.10:FF:000002">
    <property type="entry name" value="Tumor necrosis factor receptor superfamily member 13B"/>
    <property type="match status" value="1"/>
</dbReference>
<dbReference type="Gene3D" id="4.10.1290.10">
    <property type="entry name" value="Tumor necrosis factor receptor superfamily"/>
    <property type="match status" value="2"/>
</dbReference>
<dbReference type="InterPro" id="IPR015384">
    <property type="entry name" value="TACI_Cys-rich-dom"/>
</dbReference>
<dbReference type="InterPro" id="IPR022317">
    <property type="entry name" value="TNFR_13B"/>
</dbReference>
<dbReference type="PANTHER" id="PTHR15511">
    <property type="entry name" value="TUMOR NECROSIS FACTOR RECEPTOR SUPERFAMILY MEMBER 13B"/>
    <property type="match status" value="1"/>
</dbReference>
<dbReference type="PANTHER" id="PTHR15511:SF2">
    <property type="entry name" value="TUMOR NECROSIS FACTOR RECEPTOR SUPERFAMILY MEMBER 13B"/>
    <property type="match status" value="1"/>
</dbReference>
<dbReference type="Pfam" id="PF09305">
    <property type="entry name" value="TACI-CRD2"/>
    <property type="match status" value="1"/>
</dbReference>
<dbReference type="PRINTS" id="PR01963">
    <property type="entry name" value="TNFACTORR13B"/>
</dbReference>
<dbReference type="SUPFAM" id="SSF57586">
    <property type="entry name" value="TNF receptor-like"/>
    <property type="match status" value="1"/>
</dbReference>